<proteinExistence type="inferred from homology"/>
<dbReference type="EMBL" id="AE005176">
    <property type="protein sequence ID" value="AAK06179.1"/>
    <property type="molecule type" value="Genomic_DNA"/>
</dbReference>
<dbReference type="PIR" id="A86885">
    <property type="entry name" value="A86885"/>
</dbReference>
<dbReference type="RefSeq" id="NP_268238.1">
    <property type="nucleotide sequence ID" value="NC_002662.1"/>
</dbReference>
<dbReference type="RefSeq" id="WP_003129922.1">
    <property type="nucleotide sequence ID" value="NC_002662.1"/>
</dbReference>
<dbReference type="SMR" id="Q9CDY0"/>
<dbReference type="PaxDb" id="272623-L0382"/>
<dbReference type="EnsemblBacteria" id="AAK06179">
    <property type="protein sequence ID" value="AAK06179"/>
    <property type="gene ID" value="L0382"/>
</dbReference>
<dbReference type="GeneID" id="89634429"/>
<dbReference type="KEGG" id="lla:L0382"/>
<dbReference type="PATRIC" id="fig|272623.7.peg.2240"/>
<dbReference type="eggNOG" id="COG0098">
    <property type="taxonomic scope" value="Bacteria"/>
</dbReference>
<dbReference type="HOGENOM" id="CLU_065898_2_2_9"/>
<dbReference type="OrthoDB" id="9809045at2"/>
<dbReference type="Proteomes" id="UP000002196">
    <property type="component" value="Chromosome"/>
</dbReference>
<dbReference type="GO" id="GO:0015935">
    <property type="term" value="C:small ribosomal subunit"/>
    <property type="evidence" value="ECO:0007669"/>
    <property type="project" value="InterPro"/>
</dbReference>
<dbReference type="GO" id="GO:0019843">
    <property type="term" value="F:rRNA binding"/>
    <property type="evidence" value="ECO:0007669"/>
    <property type="project" value="UniProtKB-UniRule"/>
</dbReference>
<dbReference type="GO" id="GO:0003735">
    <property type="term" value="F:structural constituent of ribosome"/>
    <property type="evidence" value="ECO:0007669"/>
    <property type="project" value="InterPro"/>
</dbReference>
<dbReference type="GO" id="GO:0006412">
    <property type="term" value="P:translation"/>
    <property type="evidence" value="ECO:0007669"/>
    <property type="project" value="UniProtKB-UniRule"/>
</dbReference>
<dbReference type="FunFam" id="3.30.160.20:FF:000001">
    <property type="entry name" value="30S ribosomal protein S5"/>
    <property type="match status" value="1"/>
</dbReference>
<dbReference type="FunFam" id="3.30.230.10:FF:000002">
    <property type="entry name" value="30S ribosomal protein S5"/>
    <property type="match status" value="1"/>
</dbReference>
<dbReference type="Gene3D" id="3.30.160.20">
    <property type="match status" value="1"/>
</dbReference>
<dbReference type="Gene3D" id="3.30.230.10">
    <property type="match status" value="1"/>
</dbReference>
<dbReference type="HAMAP" id="MF_01307_B">
    <property type="entry name" value="Ribosomal_uS5_B"/>
    <property type="match status" value="1"/>
</dbReference>
<dbReference type="InterPro" id="IPR020568">
    <property type="entry name" value="Ribosomal_Su5_D2-typ_SF"/>
</dbReference>
<dbReference type="InterPro" id="IPR000851">
    <property type="entry name" value="Ribosomal_uS5"/>
</dbReference>
<dbReference type="InterPro" id="IPR005712">
    <property type="entry name" value="Ribosomal_uS5_bac-type"/>
</dbReference>
<dbReference type="InterPro" id="IPR005324">
    <property type="entry name" value="Ribosomal_uS5_C"/>
</dbReference>
<dbReference type="InterPro" id="IPR013810">
    <property type="entry name" value="Ribosomal_uS5_N"/>
</dbReference>
<dbReference type="InterPro" id="IPR018192">
    <property type="entry name" value="Ribosomal_uS5_N_CS"/>
</dbReference>
<dbReference type="InterPro" id="IPR014721">
    <property type="entry name" value="Ribsml_uS5_D2-typ_fold_subgr"/>
</dbReference>
<dbReference type="NCBIfam" id="TIGR01021">
    <property type="entry name" value="rpsE_bact"/>
    <property type="match status" value="1"/>
</dbReference>
<dbReference type="PANTHER" id="PTHR48277">
    <property type="entry name" value="MITOCHONDRIAL RIBOSOMAL PROTEIN S5"/>
    <property type="match status" value="1"/>
</dbReference>
<dbReference type="PANTHER" id="PTHR48277:SF1">
    <property type="entry name" value="MITOCHONDRIAL RIBOSOMAL PROTEIN S5"/>
    <property type="match status" value="1"/>
</dbReference>
<dbReference type="Pfam" id="PF00333">
    <property type="entry name" value="Ribosomal_S5"/>
    <property type="match status" value="1"/>
</dbReference>
<dbReference type="Pfam" id="PF03719">
    <property type="entry name" value="Ribosomal_S5_C"/>
    <property type="match status" value="1"/>
</dbReference>
<dbReference type="SUPFAM" id="SSF54768">
    <property type="entry name" value="dsRNA-binding domain-like"/>
    <property type="match status" value="1"/>
</dbReference>
<dbReference type="SUPFAM" id="SSF54211">
    <property type="entry name" value="Ribosomal protein S5 domain 2-like"/>
    <property type="match status" value="1"/>
</dbReference>
<dbReference type="PROSITE" id="PS00585">
    <property type="entry name" value="RIBOSOMAL_S5"/>
    <property type="match status" value="1"/>
</dbReference>
<dbReference type="PROSITE" id="PS50881">
    <property type="entry name" value="S5_DSRBD"/>
    <property type="match status" value="1"/>
</dbReference>
<gene>
    <name evidence="1" type="primary">rpsE</name>
    <name type="ordered locus">LL2081</name>
    <name type="ORF">L0382</name>
</gene>
<feature type="chain" id="PRO_0000131530" description="Small ribosomal subunit protein uS5">
    <location>
        <begin position="1"/>
        <end position="168"/>
    </location>
</feature>
<feature type="domain" description="S5 DRBM" evidence="1">
    <location>
        <begin position="14"/>
        <end position="77"/>
    </location>
</feature>
<keyword id="KW-1185">Reference proteome</keyword>
<keyword id="KW-0687">Ribonucleoprotein</keyword>
<keyword id="KW-0689">Ribosomal protein</keyword>
<keyword id="KW-0694">RNA-binding</keyword>
<keyword id="KW-0699">rRNA-binding</keyword>
<organism>
    <name type="scientific">Lactococcus lactis subsp. lactis (strain IL1403)</name>
    <name type="common">Streptococcus lactis</name>
    <dbReference type="NCBI Taxonomy" id="272623"/>
    <lineage>
        <taxon>Bacteria</taxon>
        <taxon>Bacillati</taxon>
        <taxon>Bacillota</taxon>
        <taxon>Bacilli</taxon>
        <taxon>Lactobacillales</taxon>
        <taxon>Streptococcaceae</taxon>
        <taxon>Lactococcus</taxon>
    </lineage>
</organism>
<protein>
    <recommendedName>
        <fullName evidence="1">Small ribosomal subunit protein uS5</fullName>
    </recommendedName>
    <alternativeName>
        <fullName evidence="2">30S ribosomal protein S5</fullName>
    </alternativeName>
</protein>
<name>RS5_LACLA</name>
<sequence>MAENRRNDREQSEFEERVVSINRVTKVVKGGRRLRFAALVVVGDRNGRVGFGTGKAQEVPEAIRKAIEAAKKNLITVPMVGTTLPHEALGVFGGGKILLKPAVEGAGVAAGGAVRAVLELAGVADVTSKSLGSNTPINVVRATVDGLNQLKRAEEVAALRGKSVSDFA</sequence>
<reference key="1">
    <citation type="journal article" date="2001" name="Genome Res.">
        <title>The complete genome sequence of the lactic acid bacterium Lactococcus lactis ssp. lactis IL1403.</title>
        <authorList>
            <person name="Bolotin A."/>
            <person name="Wincker P."/>
            <person name="Mauger S."/>
            <person name="Jaillon O."/>
            <person name="Malarme K."/>
            <person name="Weissenbach J."/>
            <person name="Ehrlich S.D."/>
            <person name="Sorokin A."/>
        </authorList>
    </citation>
    <scope>NUCLEOTIDE SEQUENCE [LARGE SCALE GENOMIC DNA]</scope>
    <source>
        <strain>IL1403</strain>
    </source>
</reference>
<accession>Q9CDY0</accession>
<comment type="function">
    <text evidence="1">With S4 and S12 plays an important role in translational accuracy.</text>
</comment>
<comment type="function">
    <text evidence="1">Located at the back of the 30S subunit body where it stabilizes the conformation of the head with respect to the body.</text>
</comment>
<comment type="subunit">
    <text evidence="1">Part of the 30S ribosomal subunit. Contacts proteins S4 and S8.</text>
</comment>
<comment type="domain">
    <text>The N-terminal domain interacts with the head of the 30S subunit; the C-terminal domain interacts with the body and contacts protein S4. The interaction surface between S4 and S5 is involved in control of translational fidelity.</text>
</comment>
<comment type="similarity">
    <text evidence="1">Belongs to the universal ribosomal protein uS5 family.</text>
</comment>
<evidence type="ECO:0000255" key="1">
    <source>
        <dbReference type="HAMAP-Rule" id="MF_01307"/>
    </source>
</evidence>
<evidence type="ECO:0000305" key="2"/>